<organismHost>
    <name type="scientific">Acheta domesticus</name>
    <name type="common">House cricket</name>
    <dbReference type="NCBI Taxonomy" id="6997"/>
</organismHost>
<organismHost>
    <name type="scientific">Chilo suppressalis</name>
    <name type="common">Asiatic rice borer moth</name>
    <dbReference type="NCBI Taxonomy" id="168631"/>
</organismHost>
<organismHost>
    <name type="scientific">Gryllus bimaculatus</name>
    <name type="common">Two-spotted cricket</name>
    <dbReference type="NCBI Taxonomy" id="6999"/>
</organismHost>
<organismHost>
    <name type="scientific">Gryllus campestris</name>
    <dbReference type="NCBI Taxonomy" id="58607"/>
</organismHost>
<organismHost>
    <name type="scientific">Spodoptera frugiperda</name>
    <name type="common">Fall armyworm</name>
    <dbReference type="NCBI Taxonomy" id="7108"/>
</organismHost>
<dbReference type="EMBL" id="AF303741">
    <property type="protein sequence ID" value="AAK82083.1"/>
    <property type="molecule type" value="Genomic_DNA"/>
</dbReference>
<dbReference type="RefSeq" id="NP_149684.1">
    <property type="nucleotide sequence ID" value="NC_003038.1"/>
</dbReference>
<dbReference type="KEGG" id="vg:1733278"/>
<dbReference type="Proteomes" id="UP000001359">
    <property type="component" value="Genome"/>
</dbReference>
<feature type="chain" id="PRO_0000378031" description="Uncharacterized protein 221L">
    <location>
        <begin position="1"/>
        <end position="56"/>
    </location>
</feature>
<gene>
    <name type="ORF">IIV6-221L</name>
</gene>
<organism>
    <name type="scientific">Invertebrate iridescent virus 6</name>
    <name type="common">IIV-6</name>
    <name type="synonym">Chilo iridescent virus</name>
    <dbReference type="NCBI Taxonomy" id="176652"/>
    <lineage>
        <taxon>Viruses</taxon>
        <taxon>Varidnaviria</taxon>
        <taxon>Bamfordvirae</taxon>
        <taxon>Nucleocytoviricota</taxon>
        <taxon>Megaviricetes</taxon>
        <taxon>Pimascovirales</taxon>
        <taxon>Iridoviridae</taxon>
        <taxon>Betairidovirinae</taxon>
        <taxon>Iridovirus</taxon>
    </lineage>
</organism>
<reference key="1">
    <citation type="journal article" date="2001" name="Virology">
        <title>Analysis of the first complete DNA sequence of an invertebrate iridovirus: coding strategy of the genome of Chilo iridescent virus.</title>
        <authorList>
            <person name="Jakob N.J."/>
            <person name="Mueller K."/>
            <person name="Bahr U."/>
            <person name="Darai G."/>
        </authorList>
    </citation>
    <scope>NUCLEOTIDE SEQUENCE [LARGE SCALE GENOMIC DNA]</scope>
</reference>
<reference key="2">
    <citation type="journal article" date="2007" name="Virol. J.">
        <title>Comparative genomic analysis of the family Iridoviridae: re-annotating and defining the core set of iridovirus genes.</title>
        <authorList>
            <person name="Eaton H.E."/>
            <person name="Metcalf J."/>
            <person name="Penny E."/>
            <person name="Tcherepanov V."/>
            <person name="Upton C."/>
            <person name="Brunetti C.R."/>
        </authorList>
    </citation>
    <scope>GENOME REANNOTATION</scope>
</reference>
<proteinExistence type="predicted"/>
<protein>
    <recommendedName>
        <fullName>Uncharacterized protein 221L</fullName>
    </recommendedName>
</protein>
<keyword id="KW-1185">Reference proteome</keyword>
<name>221L_IIV6</name>
<sequence>MLQTNSMLIFPAKRHLQDGHYLAGRLQFLYQLGQLLMRLQLQQHPLVIKYGQVQMV</sequence>
<accession>Q91FV0</accession>